<organism>
    <name type="scientific">Leptospira borgpetersenii serovar Hardjo-bovis (strain L550)</name>
    <dbReference type="NCBI Taxonomy" id="355276"/>
    <lineage>
        <taxon>Bacteria</taxon>
        <taxon>Pseudomonadati</taxon>
        <taxon>Spirochaetota</taxon>
        <taxon>Spirochaetia</taxon>
        <taxon>Leptospirales</taxon>
        <taxon>Leptospiraceae</taxon>
        <taxon>Leptospira</taxon>
    </lineage>
</organism>
<feature type="chain" id="PRO_1000022702" description="Trigger factor">
    <location>
        <begin position="1"/>
        <end position="451"/>
    </location>
</feature>
<feature type="domain" description="PPIase FKBP-type" evidence="1">
    <location>
        <begin position="163"/>
        <end position="248"/>
    </location>
</feature>
<keyword id="KW-0131">Cell cycle</keyword>
<keyword id="KW-0132">Cell division</keyword>
<keyword id="KW-0143">Chaperone</keyword>
<keyword id="KW-0963">Cytoplasm</keyword>
<keyword id="KW-0413">Isomerase</keyword>
<keyword id="KW-0697">Rotamase</keyword>
<dbReference type="EC" id="5.2.1.8" evidence="1"/>
<dbReference type="EMBL" id="CP000348">
    <property type="protein sequence ID" value="ABJ78648.1"/>
    <property type="molecule type" value="Genomic_DNA"/>
</dbReference>
<dbReference type="RefSeq" id="WP_011669903.1">
    <property type="nucleotide sequence ID" value="NC_008508.1"/>
</dbReference>
<dbReference type="SMR" id="Q052U7"/>
<dbReference type="KEGG" id="lbl:LBL_1140"/>
<dbReference type="HOGENOM" id="CLU_033058_3_2_12"/>
<dbReference type="GO" id="GO:0005737">
    <property type="term" value="C:cytoplasm"/>
    <property type="evidence" value="ECO:0007669"/>
    <property type="project" value="UniProtKB-SubCell"/>
</dbReference>
<dbReference type="GO" id="GO:0003755">
    <property type="term" value="F:peptidyl-prolyl cis-trans isomerase activity"/>
    <property type="evidence" value="ECO:0007669"/>
    <property type="project" value="UniProtKB-UniRule"/>
</dbReference>
<dbReference type="GO" id="GO:0044183">
    <property type="term" value="F:protein folding chaperone"/>
    <property type="evidence" value="ECO:0007669"/>
    <property type="project" value="TreeGrafter"/>
</dbReference>
<dbReference type="GO" id="GO:0043022">
    <property type="term" value="F:ribosome binding"/>
    <property type="evidence" value="ECO:0007669"/>
    <property type="project" value="TreeGrafter"/>
</dbReference>
<dbReference type="GO" id="GO:0051083">
    <property type="term" value="P:'de novo' cotranslational protein folding"/>
    <property type="evidence" value="ECO:0007669"/>
    <property type="project" value="TreeGrafter"/>
</dbReference>
<dbReference type="GO" id="GO:0051301">
    <property type="term" value="P:cell division"/>
    <property type="evidence" value="ECO:0007669"/>
    <property type="project" value="UniProtKB-KW"/>
</dbReference>
<dbReference type="GO" id="GO:0061077">
    <property type="term" value="P:chaperone-mediated protein folding"/>
    <property type="evidence" value="ECO:0007669"/>
    <property type="project" value="TreeGrafter"/>
</dbReference>
<dbReference type="GO" id="GO:0015031">
    <property type="term" value="P:protein transport"/>
    <property type="evidence" value="ECO:0007669"/>
    <property type="project" value="UniProtKB-UniRule"/>
</dbReference>
<dbReference type="GO" id="GO:0043335">
    <property type="term" value="P:protein unfolding"/>
    <property type="evidence" value="ECO:0007669"/>
    <property type="project" value="TreeGrafter"/>
</dbReference>
<dbReference type="FunFam" id="3.30.70.1050:FF:000008">
    <property type="entry name" value="Trigger factor"/>
    <property type="match status" value="1"/>
</dbReference>
<dbReference type="Gene3D" id="3.10.50.40">
    <property type="match status" value="1"/>
</dbReference>
<dbReference type="Gene3D" id="3.30.70.1050">
    <property type="entry name" value="Trigger factor ribosome-binding domain"/>
    <property type="match status" value="1"/>
</dbReference>
<dbReference type="Gene3D" id="1.10.3120.10">
    <property type="entry name" value="Trigger factor, C-terminal domain"/>
    <property type="match status" value="1"/>
</dbReference>
<dbReference type="HAMAP" id="MF_00303">
    <property type="entry name" value="Trigger_factor_Tig"/>
    <property type="match status" value="1"/>
</dbReference>
<dbReference type="InterPro" id="IPR046357">
    <property type="entry name" value="PPIase_dom_sf"/>
</dbReference>
<dbReference type="InterPro" id="IPR001179">
    <property type="entry name" value="PPIase_FKBP_dom"/>
</dbReference>
<dbReference type="InterPro" id="IPR005215">
    <property type="entry name" value="Trig_fac"/>
</dbReference>
<dbReference type="InterPro" id="IPR008880">
    <property type="entry name" value="Trigger_fac_C"/>
</dbReference>
<dbReference type="InterPro" id="IPR037041">
    <property type="entry name" value="Trigger_fac_C_sf"/>
</dbReference>
<dbReference type="InterPro" id="IPR008881">
    <property type="entry name" value="Trigger_fac_ribosome-bd_bac"/>
</dbReference>
<dbReference type="InterPro" id="IPR036611">
    <property type="entry name" value="Trigger_fac_ribosome-bd_sf"/>
</dbReference>
<dbReference type="InterPro" id="IPR027304">
    <property type="entry name" value="Trigger_fact/SurA_dom_sf"/>
</dbReference>
<dbReference type="NCBIfam" id="TIGR00115">
    <property type="entry name" value="tig"/>
    <property type="match status" value="1"/>
</dbReference>
<dbReference type="PANTHER" id="PTHR30560">
    <property type="entry name" value="TRIGGER FACTOR CHAPERONE AND PEPTIDYL-PROLYL CIS/TRANS ISOMERASE"/>
    <property type="match status" value="1"/>
</dbReference>
<dbReference type="PANTHER" id="PTHR30560:SF3">
    <property type="entry name" value="TRIGGER FACTOR-LIKE PROTEIN TIG, CHLOROPLASTIC"/>
    <property type="match status" value="1"/>
</dbReference>
<dbReference type="Pfam" id="PF00254">
    <property type="entry name" value="FKBP_C"/>
    <property type="match status" value="1"/>
</dbReference>
<dbReference type="Pfam" id="PF05698">
    <property type="entry name" value="Trigger_C"/>
    <property type="match status" value="1"/>
</dbReference>
<dbReference type="Pfam" id="PF05697">
    <property type="entry name" value="Trigger_N"/>
    <property type="match status" value="1"/>
</dbReference>
<dbReference type="PIRSF" id="PIRSF003095">
    <property type="entry name" value="Trigger_factor"/>
    <property type="match status" value="1"/>
</dbReference>
<dbReference type="SUPFAM" id="SSF54534">
    <property type="entry name" value="FKBP-like"/>
    <property type="match status" value="1"/>
</dbReference>
<dbReference type="SUPFAM" id="SSF109998">
    <property type="entry name" value="Triger factor/SurA peptide-binding domain-like"/>
    <property type="match status" value="1"/>
</dbReference>
<dbReference type="SUPFAM" id="SSF102735">
    <property type="entry name" value="Trigger factor ribosome-binding domain"/>
    <property type="match status" value="1"/>
</dbReference>
<accession>Q052U7</accession>
<protein>
    <recommendedName>
        <fullName evidence="1">Trigger factor</fullName>
        <shortName evidence="1">TF</shortName>
        <ecNumber evidence="1">5.2.1.8</ecNumber>
    </recommendedName>
    <alternativeName>
        <fullName evidence="1">PPIase</fullName>
    </alternativeName>
</protein>
<name>TIG_LEPBL</name>
<sequence length="451" mass="52171">MDYKTKKNSNATVDIKLTFEASDLEKAFDKTYAEKQKNIKIPGFRPGKAPLNMVKRHLGDTVASDAINTLIVDGMASILTKLEHPMVRFPKFEIQDYQPGKNLIATAVYETNPEITLGKYKKIKVKLPEVSVSDSDIFDEIENIRKQLARKQLKEDGQTAASGDIIDMEYTVCEKGQEPKNASNTSNDYHLGHENNLKGFDENLYGLGVGDRKEFSHTFPEDYLQNEVAGKTFEYSVTIKALYVNILPTVDDDLAAEFDGSDSLNTLKDKIRKNLKERFEEGIRNKKLEEIFKEIIDDSKYIFPDSYVKEESEHVFHNMIHEFKLPHITMEKYAKMIKKDLKEVQESFRNLAENRLKHFFTRQKIAEIENVTYTETDFDADLEKLASSYQIPLSDLKEELEKGKLMDQYRENFFAKKVDHTLFDLVEKKYTNKLSIGQVKDYLNQKEEQKV</sequence>
<evidence type="ECO:0000255" key="1">
    <source>
        <dbReference type="HAMAP-Rule" id="MF_00303"/>
    </source>
</evidence>
<proteinExistence type="inferred from homology"/>
<gene>
    <name evidence="1" type="primary">tig</name>
    <name type="ordered locus">LBL_1140</name>
</gene>
<comment type="function">
    <text evidence="1">Involved in protein export. Acts as a chaperone by maintaining the newly synthesized protein in an open conformation. Functions as a peptidyl-prolyl cis-trans isomerase.</text>
</comment>
<comment type="catalytic activity">
    <reaction evidence="1">
        <text>[protein]-peptidylproline (omega=180) = [protein]-peptidylproline (omega=0)</text>
        <dbReference type="Rhea" id="RHEA:16237"/>
        <dbReference type="Rhea" id="RHEA-COMP:10747"/>
        <dbReference type="Rhea" id="RHEA-COMP:10748"/>
        <dbReference type="ChEBI" id="CHEBI:83833"/>
        <dbReference type="ChEBI" id="CHEBI:83834"/>
        <dbReference type="EC" id="5.2.1.8"/>
    </reaction>
</comment>
<comment type="subcellular location">
    <subcellularLocation>
        <location>Cytoplasm</location>
    </subcellularLocation>
    <text evidence="1">About half TF is bound to the ribosome near the polypeptide exit tunnel while the other half is free in the cytoplasm.</text>
</comment>
<comment type="domain">
    <text evidence="1">Consists of 3 domains; the N-terminus binds the ribosome, the middle domain has PPIase activity, while the C-terminus has intrinsic chaperone activity on its own.</text>
</comment>
<comment type="similarity">
    <text evidence="1">Belongs to the FKBP-type PPIase family. Tig subfamily.</text>
</comment>
<reference key="1">
    <citation type="journal article" date="2006" name="Proc. Natl. Acad. Sci. U.S.A.">
        <title>Genome reduction in Leptospira borgpetersenii reflects limited transmission potential.</title>
        <authorList>
            <person name="Bulach D.M."/>
            <person name="Zuerner R.L."/>
            <person name="Wilson P."/>
            <person name="Seemann T."/>
            <person name="McGrath A."/>
            <person name="Cullen P.A."/>
            <person name="Davis J."/>
            <person name="Johnson M."/>
            <person name="Kuczek E."/>
            <person name="Alt D.P."/>
            <person name="Peterson-Burch B."/>
            <person name="Coppel R.L."/>
            <person name="Rood J.I."/>
            <person name="Davies J.K."/>
            <person name="Adler B."/>
        </authorList>
    </citation>
    <scope>NUCLEOTIDE SEQUENCE [LARGE SCALE GENOMIC DNA]</scope>
    <source>
        <strain>L550</strain>
    </source>
</reference>